<keyword id="KW-1185">Reference proteome</keyword>
<feature type="chain" id="PRO_0000209164" description="Protein Smg">
    <location>
        <begin position="1"/>
        <end position="157"/>
    </location>
</feature>
<proteinExistence type="inferred from homology"/>
<accession>P57562</accession>
<gene>
    <name evidence="1" type="primary">smg</name>
    <name type="ordered locus">BU495</name>
</gene>
<comment type="similarity">
    <text evidence="1">Belongs to the Smg family.</text>
</comment>
<dbReference type="EMBL" id="BA000003">
    <property type="protein sequence ID" value="BAB13188.1"/>
    <property type="molecule type" value="Genomic_DNA"/>
</dbReference>
<dbReference type="RefSeq" id="NP_240302.1">
    <property type="nucleotide sequence ID" value="NC_002528.1"/>
</dbReference>
<dbReference type="RefSeq" id="WP_009874446.1">
    <property type="nucleotide sequence ID" value="NC_002528.1"/>
</dbReference>
<dbReference type="SMR" id="P57562"/>
<dbReference type="STRING" id="563178.BUAP5A_488"/>
<dbReference type="EnsemblBacteria" id="BAB13188">
    <property type="protein sequence ID" value="BAB13188"/>
    <property type="gene ID" value="BAB13188"/>
</dbReference>
<dbReference type="KEGG" id="buc:BU495"/>
<dbReference type="PATRIC" id="fig|107806.10.peg.500"/>
<dbReference type="eggNOG" id="COG2922">
    <property type="taxonomic scope" value="Bacteria"/>
</dbReference>
<dbReference type="HOGENOM" id="CLU_133242_0_0_6"/>
<dbReference type="Proteomes" id="UP000001806">
    <property type="component" value="Chromosome"/>
</dbReference>
<dbReference type="HAMAP" id="MF_00598">
    <property type="entry name" value="Smg"/>
    <property type="match status" value="1"/>
</dbReference>
<dbReference type="InterPro" id="IPR007456">
    <property type="entry name" value="Smg"/>
</dbReference>
<dbReference type="NCBIfam" id="NF002897">
    <property type="entry name" value="PRK03430.1"/>
    <property type="match status" value="1"/>
</dbReference>
<dbReference type="PANTHER" id="PTHR38692">
    <property type="entry name" value="PROTEIN SMG"/>
    <property type="match status" value="1"/>
</dbReference>
<dbReference type="PANTHER" id="PTHR38692:SF1">
    <property type="entry name" value="PROTEIN SMG"/>
    <property type="match status" value="1"/>
</dbReference>
<dbReference type="Pfam" id="PF04361">
    <property type="entry name" value="DUF494"/>
    <property type="match status" value="1"/>
</dbReference>
<name>SMG_BUCAI</name>
<protein>
    <recommendedName>
        <fullName evidence="1">Protein Smg</fullName>
    </recommendedName>
</protein>
<organism>
    <name type="scientific">Buchnera aphidicola subsp. Acyrthosiphon pisum (strain APS)</name>
    <name type="common">Acyrthosiphon pisum symbiotic bacterium</name>
    <dbReference type="NCBI Taxonomy" id="107806"/>
    <lineage>
        <taxon>Bacteria</taxon>
        <taxon>Pseudomonadati</taxon>
        <taxon>Pseudomonadota</taxon>
        <taxon>Gammaproteobacteria</taxon>
        <taxon>Enterobacterales</taxon>
        <taxon>Erwiniaceae</taxon>
        <taxon>Buchnera</taxon>
    </lineage>
</organism>
<sequence>MFDILIYLFENYIHNESRISIDYDSLTNDLSDIGFQRRDIYNALSWLKNLSCYKKNIIPSINPLSNKITIRIYTQEESLKLNVDCRGFILFLEQLEILTLDTREVIIERIMELDINELNLEDLKWIVLIVLFNVPGCESAYHKLENLLFNFKEDIIH</sequence>
<evidence type="ECO:0000255" key="1">
    <source>
        <dbReference type="HAMAP-Rule" id="MF_00598"/>
    </source>
</evidence>
<reference key="1">
    <citation type="journal article" date="2000" name="Nature">
        <title>Genome sequence of the endocellular bacterial symbiont of aphids Buchnera sp. APS.</title>
        <authorList>
            <person name="Shigenobu S."/>
            <person name="Watanabe H."/>
            <person name="Hattori M."/>
            <person name="Sakaki Y."/>
            <person name="Ishikawa H."/>
        </authorList>
    </citation>
    <scope>NUCLEOTIDE SEQUENCE [LARGE SCALE GENOMIC DNA]</scope>
    <source>
        <strain>APS</strain>
    </source>
</reference>